<sequence>AFANTGVEIVSIDTYLFSLYDEDK</sequence>
<accession>P80741</accession>
<protein>
    <recommendedName>
        <fullName>Major pollen allergen Ole e 4</fullName>
    </recommendedName>
    <alternativeName>
        <fullName>Allergen Ole e IV</fullName>
    </alternativeName>
    <allergenName>Ole e 4</allergenName>
</protein>
<organism>
    <name type="scientific">Olea europaea</name>
    <name type="common">Common olive</name>
    <dbReference type="NCBI Taxonomy" id="4146"/>
    <lineage>
        <taxon>Eukaryota</taxon>
        <taxon>Viridiplantae</taxon>
        <taxon>Streptophyta</taxon>
        <taxon>Embryophyta</taxon>
        <taxon>Tracheophyta</taxon>
        <taxon>Spermatophyta</taxon>
        <taxon>Magnoliopsida</taxon>
        <taxon>eudicotyledons</taxon>
        <taxon>Gunneridae</taxon>
        <taxon>Pentapetalae</taxon>
        <taxon>asterids</taxon>
        <taxon>lamiids</taxon>
        <taxon>Lamiales</taxon>
        <taxon>Oleaceae</taxon>
        <taxon>Oleeae</taxon>
        <taxon>Olea</taxon>
    </lineage>
</organism>
<reference key="1">
    <citation type="journal article" date="1998" name="J. Allergy Clin. Immunol.">
        <title>Purification, characterization, and partial sequencing of two new allergens of Olea europaea.</title>
        <authorList>
            <person name="Boluda L."/>
            <person name="Alonso C."/>
            <person name="Fernandez-Caldas E."/>
        </authorList>
    </citation>
    <scope>PROTEIN SEQUENCE</scope>
    <source>
        <tissue>Pollen</tissue>
    </source>
</reference>
<reference key="2">
    <citation type="journal article" date="2012" name="Talanta">
        <title>Analysis of olive allergens.</title>
        <authorList>
            <person name="Esteve C."/>
            <person name="Montealegre C."/>
            <person name="Marina M.L."/>
            <person name="Garcia M.C."/>
        </authorList>
    </citation>
    <scope>REVIEW</scope>
    <scope>NOMENCLATURE</scope>
</reference>
<keyword id="KW-0020">Allergen</keyword>
<keyword id="KW-0903">Direct protein sequencing</keyword>
<comment type="PTM">
    <text>The N-terminus is blocked.</text>
</comment>
<comment type="allergen">
    <text>Causes an allergic reaction in human. Major allergen from olive pollen. Important in Mediterranean countries.</text>
</comment>
<comment type="similarity">
    <text evidence="1">Belongs to the glycosyl hydrolase 17 family.</text>
</comment>
<comment type="caution">
    <text evidence="2">The sequences determined for the two internal peptides of Ole e 4 are identical to internal fragments of Ole e 9. However, the apparent molecular weight of the two proteins is different and they are still classified as two separate allergens (PubMed:22385802), even though we may be facing two different isoforms of the same allergen.</text>
</comment>
<proteinExistence type="evidence at protein level"/>
<name>ALL4_OLEEU</name>
<dbReference type="Allergome" id="3385">
    <property type="allergen name" value="Ole e 4.0101"/>
</dbReference>
<dbReference type="Allergome" id="492">
    <property type="allergen name" value="Ole e 4"/>
</dbReference>
<feature type="chain" id="PRO_0000064559" description="Major pollen allergen Ole e 4">
    <location>
        <begin position="1" status="less than"/>
        <end position="24" status="greater than"/>
    </location>
</feature>
<feature type="non-consecutive residues" evidence="1">
    <location>
        <begin position="10"/>
        <end position="11"/>
    </location>
</feature>
<feature type="non-terminal residue">
    <location>
        <position position="1"/>
    </location>
</feature>
<feature type="non-terminal residue">
    <location>
        <position position="24"/>
    </location>
</feature>
<evidence type="ECO:0000305" key="1"/>
<evidence type="ECO:0000305" key="2">
    <source>
    </source>
</evidence>